<feature type="chain" id="PRO_1000098327" description="Probable cytosol aminopeptidase">
    <location>
        <begin position="1"/>
        <end position="503"/>
    </location>
</feature>
<feature type="active site" evidence="1">
    <location>
        <position position="282"/>
    </location>
</feature>
<feature type="active site" evidence="1">
    <location>
        <position position="356"/>
    </location>
</feature>
<feature type="binding site" evidence="1">
    <location>
        <position position="270"/>
    </location>
    <ligand>
        <name>Mn(2+)</name>
        <dbReference type="ChEBI" id="CHEBI:29035"/>
        <label>2</label>
    </ligand>
</feature>
<feature type="binding site" evidence="1">
    <location>
        <position position="275"/>
    </location>
    <ligand>
        <name>Mn(2+)</name>
        <dbReference type="ChEBI" id="CHEBI:29035"/>
        <label>1</label>
    </ligand>
</feature>
<feature type="binding site" evidence="1">
    <location>
        <position position="275"/>
    </location>
    <ligand>
        <name>Mn(2+)</name>
        <dbReference type="ChEBI" id="CHEBI:29035"/>
        <label>2</label>
    </ligand>
</feature>
<feature type="binding site" evidence="1">
    <location>
        <position position="293"/>
    </location>
    <ligand>
        <name>Mn(2+)</name>
        <dbReference type="ChEBI" id="CHEBI:29035"/>
        <label>2</label>
    </ligand>
</feature>
<feature type="binding site" evidence="1">
    <location>
        <position position="352"/>
    </location>
    <ligand>
        <name>Mn(2+)</name>
        <dbReference type="ChEBI" id="CHEBI:29035"/>
        <label>1</label>
    </ligand>
</feature>
<feature type="binding site" evidence="1">
    <location>
        <position position="354"/>
    </location>
    <ligand>
        <name>Mn(2+)</name>
        <dbReference type="ChEBI" id="CHEBI:29035"/>
        <label>1</label>
    </ligand>
</feature>
<feature type="binding site" evidence="1">
    <location>
        <position position="354"/>
    </location>
    <ligand>
        <name>Mn(2+)</name>
        <dbReference type="ChEBI" id="CHEBI:29035"/>
        <label>2</label>
    </ligand>
</feature>
<reference key="1">
    <citation type="journal article" date="2008" name="PLoS Genet.">
        <title>Complete genome sequence of the N2-fixing broad host range endophyte Klebsiella pneumoniae 342 and virulence predictions verified in mice.</title>
        <authorList>
            <person name="Fouts D.E."/>
            <person name="Tyler H.L."/>
            <person name="DeBoy R.T."/>
            <person name="Daugherty S."/>
            <person name="Ren Q."/>
            <person name="Badger J.H."/>
            <person name="Durkin A.S."/>
            <person name="Huot H."/>
            <person name="Shrivastava S."/>
            <person name="Kothari S."/>
            <person name="Dodson R.J."/>
            <person name="Mohamoud Y."/>
            <person name="Khouri H."/>
            <person name="Roesch L.F.W."/>
            <person name="Krogfelt K.A."/>
            <person name="Struve C."/>
            <person name="Triplett E.W."/>
            <person name="Methe B.A."/>
        </authorList>
    </citation>
    <scope>NUCLEOTIDE SEQUENCE [LARGE SCALE GENOMIC DNA]</scope>
    <source>
        <strain>342</strain>
    </source>
</reference>
<comment type="function">
    <text evidence="1">Presumably involved in the processing and regular turnover of intracellular proteins. Catalyzes the removal of unsubstituted N-terminal amino acids from various peptides.</text>
</comment>
<comment type="catalytic activity">
    <reaction evidence="1">
        <text>Release of an N-terminal amino acid, Xaa-|-Yaa-, in which Xaa is preferably Leu, but may be other amino acids including Pro although not Arg or Lys, and Yaa may be Pro. Amino acid amides and methyl esters are also readily hydrolyzed, but rates on arylamides are exceedingly low.</text>
        <dbReference type="EC" id="3.4.11.1"/>
    </reaction>
</comment>
<comment type="catalytic activity">
    <reaction evidence="1">
        <text>Release of an N-terminal amino acid, preferentially leucine, but not glutamic or aspartic acids.</text>
        <dbReference type="EC" id="3.4.11.10"/>
    </reaction>
</comment>
<comment type="cofactor">
    <cofactor evidence="1">
        <name>Mn(2+)</name>
        <dbReference type="ChEBI" id="CHEBI:29035"/>
    </cofactor>
    <text evidence="1">Binds 2 manganese ions per subunit.</text>
</comment>
<comment type="subcellular location">
    <subcellularLocation>
        <location evidence="1">Cytoplasm</location>
    </subcellularLocation>
</comment>
<comment type="similarity">
    <text evidence="1">Belongs to the peptidase M17 family.</text>
</comment>
<protein>
    <recommendedName>
        <fullName evidence="1">Probable cytosol aminopeptidase</fullName>
        <ecNumber evidence="1">3.4.11.1</ecNumber>
    </recommendedName>
    <alternativeName>
        <fullName evidence="1">Leucine aminopeptidase</fullName>
        <shortName evidence="1">LAP</shortName>
        <ecNumber evidence="1">3.4.11.10</ecNumber>
    </alternativeName>
    <alternativeName>
        <fullName evidence="1">Leucyl aminopeptidase</fullName>
    </alternativeName>
</protein>
<dbReference type="EC" id="3.4.11.1" evidence="1"/>
<dbReference type="EC" id="3.4.11.10" evidence="1"/>
<dbReference type="EMBL" id="CP000964">
    <property type="protein sequence ID" value="ACI09530.1"/>
    <property type="molecule type" value="Genomic_DNA"/>
</dbReference>
<dbReference type="SMR" id="B5Y2T8"/>
<dbReference type="MEROPS" id="M17.003"/>
<dbReference type="KEGG" id="kpe:KPK_5003"/>
<dbReference type="HOGENOM" id="CLU_013734_2_2_6"/>
<dbReference type="Proteomes" id="UP000001734">
    <property type="component" value="Chromosome"/>
</dbReference>
<dbReference type="GO" id="GO:0005737">
    <property type="term" value="C:cytoplasm"/>
    <property type="evidence" value="ECO:0007669"/>
    <property type="project" value="UniProtKB-SubCell"/>
</dbReference>
<dbReference type="GO" id="GO:0030145">
    <property type="term" value="F:manganese ion binding"/>
    <property type="evidence" value="ECO:0007669"/>
    <property type="project" value="UniProtKB-UniRule"/>
</dbReference>
<dbReference type="GO" id="GO:0070006">
    <property type="term" value="F:metalloaminopeptidase activity"/>
    <property type="evidence" value="ECO:0007669"/>
    <property type="project" value="InterPro"/>
</dbReference>
<dbReference type="GO" id="GO:0006508">
    <property type="term" value="P:proteolysis"/>
    <property type="evidence" value="ECO:0007669"/>
    <property type="project" value="UniProtKB-KW"/>
</dbReference>
<dbReference type="CDD" id="cd00433">
    <property type="entry name" value="Peptidase_M17"/>
    <property type="match status" value="1"/>
</dbReference>
<dbReference type="FunFam" id="3.40.220.10:FF:000001">
    <property type="entry name" value="Probable cytosol aminopeptidase"/>
    <property type="match status" value="1"/>
</dbReference>
<dbReference type="FunFam" id="3.40.630.10:FF:000004">
    <property type="entry name" value="Probable cytosol aminopeptidase"/>
    <property type="match status" value="1"/>
</dbReference>
<dbReference type="Gene3D" id="3.40.220.10">
    <property type="entry name" value="Leucine Aminopeptidase, subunit E, domain 1"/>
    <property type="match status" value="1"/>
</dbReference>
<dbReference type="Gene3D" id="3.40.630.10">
    <property type="entry name" value="Zn peptidases"/>
    <property type="match status" value="1"/>
</dbReference>
<dbReference type="HAMAP" id="MF_00181">
    <property type="entry name" value="Cytosol_peptidase_M17"/>
    <property type="match status" value="1"/>
</dbReference>
<dbReference type="InterPro" id="IPR011356">
    <property type="entry name" value="Leucine_aapep/pepB"/>
</dbReference>
<dbReference type="InterPro" id="IPR043472">
    <property type="entry name" value="Macro_dom-like"/>
</dbReference>
<dbReference type="InterPro" id="IPR000819">
    <property type="entry name" value="Peptidase_M17_C"/>
</dbReference>
<dbReference type="InterPro" id="IPR023042">
    <property type="entry name" value="Peptidase_M17_leu_NH2_pept"/>
</dbReference>
<dbReference type="InterPro" id="IPR008283">
    <property type="entry name" value="Peptidase_M17_N"/>
</dbReference>
<dbReference type="NCBIfam" id="NF002072">
    <property type="entry name" value="PRK00913.1-1"/>
    <property type="match status" value="1"/>
</dbReference>
<dbReference type="NCBIfam" id="NF002074">
    <property type="entry name" value="PRK00913.1-4"/>
    <property type="match status" value="1"/>
</dbReference>
<dbReference type="PANTHER" id="PTHR11963:SF23">
    <property type="entry name" value="CYTOSOL AMINOPEPTIDASE"/>
    <property type="match status" value="1"/>
</dbReference>
<dbReference type="PANTHER" id="PTHR11963">
    <property type="entry name" value="LEUCINE AMINOPEPTIDASE-RELATED"/>
    <property type="match status" value="1"/>
</dbReference>
<dbReference type="Pfam" id="PF00883">
    <property type="entry name" value="Peptidase_M17"/>
    <property type="match status" value="1"/>
</dbReference>
<dbReference type="Pfam" id="PF02789">
    <property type="entry name" value="Peptidase_M17_N"/>
    <property type="match status" value="1"/>
</dbReference>
<dbReference type="PRINTS" id="PR00481">
    <property type="entry name" value="LAMNOPPTDASE"/>
</dbReference>
<dbReference type="SUPFAM" id="SSF52949">
    <property type="entry name" value="Macro domain-like"/>
    <property type="match status" value="1"/>
</dbReference>
<dbReference type="SUPFAM" id="SSF53187">
    <property type="entry name" value="Zn-dependent exopeptidases"/>
    <property type="match status" value="1"/>
</dbReference>
<dbReference type="PROSITE" id="PS00631">
    <property type="entry name" value="CYTOSOL_AP"/>
    <property type="match status" value="1"/>
</dbReference>
<gene>
    <name evidence="1" type="primary">pepA</name>
    <name type="ordered locus">KPK_5003</name>
</gene>
<accession>B5Y2T8</accession>
<sequence length="503" mass="54880">MEFSVKSGSPEKQRSACIVVGVFEPRRLSPIAEQLDKISDGYISALLRRGELEGKPGQTLLLHHVPNILSERILLIGCGKERELDERQYKQVIQKTINTLNDTGSMEAVCFLTELHVKGRNNYWKVRQAVETAKETLYSFDQLKTNKSEPRRPLRKMVFNVPTRRELTSGERAIQHGLAIAAGIKAAKDLGNMPPNICNAAYLASQARQLADTYSKNVITRVIGEQQMRELGMNSYLAVGNGSQNESLMSVIEYKGNPSEDARPIVLVGKGLTFDSGGISIKPAEGMDEMKYDMCGAAAVYGVMRMVAELQLPLNVIGVLAGCENMPGGRAYRPGDVLTTMSGQTVEVLNTDAEGRLVLCDVLTYVERFEPEAVIDVATLTGACVIALGHHITGLMSNHNPLAHELIGASELAGDRAWRLPLADEFQDQLESNFADMANIGGRPGGAITAGCFLSRFTRKYNWAHLDIAGTAWRSGKAKGATGRPVALLSQFLLNRAGFNGEE</sequence>
<name>AMPA_KLEP3</name>
<proteinExistence type="inferred from homology"/>
<organism>
    <name type="scientific">Klebsiella pneumoniae (strain 342)</name>
    <dbReference type="NCBI Taxonomy" id="507522"/>
    <lineage>
        <taxon>Bacteria</taxon>
        <taxon>Pseudomonadati</taxon>
        <taxon>Pseudomonadota</taxon>
        <taxon>Gammaproteobacteria</taxon>
        <taxon>Enterobacterales</taxon>
        <taxon>Enterobacteriaceae</taxon>
        <taxon>Klebsiella/Raoultella group</taxon>
        <taxon>Klebsiella</taxon>
        <taxon>Klebsiella pneumoniae complex</taxon>
    </lineage>
</organism>
<keyword id="KW-0031">Aminopeptidase</keyword>
<keyword id="KW-0963">Cytoplasm</keyword>
<keyword id="KW-0378">Hydrolase</keyword>
<keyword id="KW-0464">Manganese</keyword>
<keyword id="KW-0479">Metal-binding</keyword>
<keyword id="KW-0645">Protease</keyword>
<evidence type="ECO:0000255" key="1">
    <source>
        <dbReference type="HAMAP-Rule" id="MF_00181"/>
    </source>
</evidence>